<name>RUVA_STRT2</name>
<accession>Q5M6H5</accession>
<feature type="chain" id="PRO_0000224914" description="Holliday junction branch migration complex subunit RuvA">
    <location>
        <begin position="1"/>
        <end position="196"/>
    </location>
</feature>
<feature type="region of interest" description="Domain I" evidence="1">
    <location>
        <begin position="1"/>
        <end position="63"/>
    </location>
</feature>
<feature type="region of interest" description="Domain II" evidence="1">
    <location>
        <begin position="64"/>
        <end position="142"/>
    </location>
</feature>
<feature type="region of interest" description="Flexible linker" evidence="1">
    <location>
        <begin position="143"/>
        <end position="146"/>
    </location>
</feature>
<feature type="region of interest" description="Domain III" evidence="1">
    <location>
        <begin position="147"/>
        <end position="196"/>
    </location>
</feature>
<sequence>MYDYIKGTLVKITAKHIVIETNGLGYIVTVANPYSFSDQMNQTIQVYLHQVIRDDAHLLFGFHTEDEKEVFLKLISVSGIGPTTALAIVAVDDNQGLVAAIDNSDIKYLMKFPKIGKKTAQQMVLDLAGKFAELPAETTNTTANQTAGNQQLDEAMEALLALGYKSTELKKVKAFFEDTNETAEQYIKSALKMLMK</sequence>
<dbReference type="EMBL" id="CP000023">
    <property type="protein sequence ID" value="AAV59786.1"/>
    <property type="molecule type" value="Genomic_DNA"/>
</dbReference>
<dbReference type="RefSeq" id="WP_002949053.1">
    <property type="nucleotide sequence ID" value="NC_006448.1"/>
</dbReference>
<dbReference type="SMR" id="Q5M6H5"/>
<dbReference type="STRING" id="264199.stu0056"/>
<dbReference type="GeneID" id="66897974"/>
<dbReference type="KEGG" id="stl:stu0056"/>
<dbReference type="PATRIC" id="fig|264199.4.peg.59"/>
<dbReference type="eggNOG" id="COG0632">
    <property type="taxonomic scope" value="Bacteria"/>
</dbReference>
<dbReference type="HOGENOM" id="CLU_087936_1_0_9"/>
<dbReference type="Proteomes" id="UP000001170">
    <property type="component" value="Chromosome"/>
</dbReference>
<dbReference type="GO" id="GO:0005737">
    <property type="term" value="C:cytoplasm"/>
    <property type="evidence" value="ECO:0007669"/>
    <property type="project" value="UniProtKB-SubCell"/>
</dbReference>
<dbReference type="GO" id="GO:0009379">
    <property type="term" value="C:Holliday junction helicase complex"/>
    <property type="evidence" value="ECO:0007669"/>
    <property type="project" value="InterPro"/>
</dbReference>
<dbReference type="GO" id="GO:0048476">
    <property type="term" value="C:Holliday junction resolvase complex"/>
    <property type="evidence" value="ECO:0007669"/>
    <property type="project" value="UniProtKB-UniRule"/>
</dbReference>
<dbReference type="GO" id="GO:0005524">
    <property type="term" value="F:ATP binding"/>
    <property type="evidence" value="ECO:0007669"/>
    <property type="project" value="InterPro"/>
</dbReference>
<dbReference type="GO" id="GO:0000400">
    <property type="term" value="F:four-way junction DNA binding"/>
    <property type="evidence" value="ECO:0007669"/>
    <property type="project" value="UniProtKB-UniRule"/>
</dbReference>
<dbReference type="GO" id="GO:0009378">
    <property type="term" value="F:four-way junction helicase activity"/>
    <property type="evidence" value="ECO:0007669"/>
    <property type="project" value="InterPro"/>
</dbReference>
<dbReference type="GO" id="GO:0006310">
    <property type="term" value="P:DNA recombination"/>
    <property type="evidence" value="ECO:0007669"/>
    <property type="project" value="UniProtKB-UniRule"/>
</dbReference>
<dbReference type="GO" id="GO:0006281">
    <property type="term" value="P:DNA repair"/>
    <property type="evidence" value="ECO:0007669"/>
    <property type="project" value="UniProtKB-UniRule"/>
</dbReference>
<dbReference type="CDD" id="cd14332">
    <property type="entry name" value="UBA_RuvA_C"/>
    <property type="match status" value="1"/>
</dbReference>
<dbReference type="Gene3D" id="1.10.150.20">
    <property type="entry name" value="5' to 3' exonuclease, C-terminal subdomain"/>
    <property type="match status" value="1"/>
</dbReference>
<dbReference type="Gene3D" id="1.10.8.10">
    <property type="entry name" value="DNA helicase RuvA subunit, C-terminal domain"/>
    <property type="match status" value="1"/>
</dbReference>
<dbReference type="Gene3D" id="2.40.50.140">
    <property type="entry name" value="Nucleic acid-binding proteins"/>
    <property type="match status" value="1"/>
</dbReference>
<dbReference type="HAMAP" id="MF_00031">
    <property type="entry name" value="DNA_HJ_migration_RuvA"/>
    <property type="match status" value="1"/>
</dbReference>
<dbReference type="InterPro" id="IPR013849">
    <property type="entry name" value="DNA_helicase_Holl-junc_RuvA_I"/>
</dbReference>
<dbReference type="InterPro" id="IPR003583">
    <property type="entry name" value="Hlx-hairpin-Hlx_DNA-bd_motif"/>
</dbReference>
<dbReference type="InterPro" id="IPR012340">
    <property type="entry name" value="NA-bd_OB-fold"/>
</dbReference>
<dbReference type="InterPro" id="IPR000085">
    <property type="entry name" value="RuvA"/>
</dbReference>
<dbReference type="InterPro" id="IPR010994">
    <property type="entry name" value="RuvA_2-like"/>
</dbReference>
<dbReference type="InterPro" id="IPR011114">
    <property type="entry name" value="RuvA_C"/>
</dbReference>
<dbReference type="InterPro" id="IPR036267">
    <property type="entry name" value="RuvA_C_sf"/>
</dbReference>
<dbReference type="NCBIfam" id="TIGR00084">
    <property type="entry name" value="ruvA"/>
    <property type="match status" value="1"/>
</dbReference>
<dbReference type="Pfam" id="PF14520">
    <property type="entry name" value="HHH_5"/>
    <property type="match status" value="1"/>
</dbReference>
<dbReference type="Pfam" id="PF07499">
    <property type="entry name" value="RuvA_C"/>
    <property type="match status" value="1"/>
</dbReference>
<dbReference type="Pfam" id="PF01330">
    <property type="entry name" value="RuvA_N"/>
    <property type="match status" value="1"/>
</dbReference>
<dbReference type="SMART" id="SM00278">
    <property type="entry name" value="HhH1"/>
    <property type="match status" value="2"/>
</dbReference>
<dbReference type="SUPFAM" id="SSF46929">
    <property type="entry name" value="DNA helicase RuvA subunit, C-terminal domain"/>
    <property type="match status" value="1"/>
</dbReference>
<dbReference type="SUPFAM" id="SSF50249">
    <property type="entry name" value="Nucleic acid-binding proteins"/>
    <property type="match status" value="1"/>
</dbReference>
<dbReference type="SUPFAM" id="SSF47781">
    <property type="entry name" value="RuvA domain 2-like"/>
    <property type="match status" value="1"/>
</dbReference>
<organism>
    <name type="scientific">Streptococcus thermophilus (strain ATCC BAA-250 / LMG 18311)</name>
    <dbReference type="NCBI Taxonomy" id="264199"/>
    <lineage>
        <taxon>Bacteria</taxon>
        <taxon>Bacillati</taxon>
        <taxon>Bacillota</taxon>
        <taxon>Bacilli</taxon>
        <taxon>Lactobacillales</taxon>
        <taxon>Streptococcaceae</taxon>
        <taxon>Streptococcus</taxon>
    </lineage>
</organism>
<proteinExistence type="inferred from homology"/>
<comment type="function">
    <text evidence="1">The RuvA-RuvB-RuvC complex processes Holliday junction (HJ) DNA during genetic recombination and DNA repair, while the RuvA-RuvB complex plays an important role in the rescue of blocked DNA replication forks via replication fork reversal (RFR). RuvA specifically binds to HJ cruciform DNA, conferring on it an open structure. The RuvB hexamer acts as an ATP-dependent pump, pulling dsDNA into and through the RuvAB complex. HJ branch migration allows RuvC to scan DNA until it finds its consensus sequence, where it cleaves and resolves the cruciform DNA.</text>
</comment>
<comment type="subunit">
    <text evidence="1">Homotetramer. Forms an RuvA(8)-RuvB(12)-Holliday junction (HJ) complex. HJ DNA is sandwiched between 2 RuvA tetramers; dsDNA enters through RuvA and exits via RuvB. An RuvB hexamer assembles on each DNA strand where it exits the tetramer. Each RuvB hexamer is contacted by two RuvA subunits (via domain III) on 2 adjacent RuvB subunits; this complex drives branch migration. In the full resolvosome a probable DNA-RuvA(4)-RuvB(12)-RuvC(2) complex forms which resolves the HJ.</text>
</comment>
<comment type="subcellular location">
    <subcellularLocation>
        <location evidence="1">Cytoplasm</location>
    </subcellularLocation>
</comment>
<comment type="domain">
    <text evidence="1">Has three domains with a flexible linker between the domains II and III and assumes an 'L' shape. Domain III is highly mobile and contacts RuvB.</text>
</comment>
<comment type="similarity">
    <text evidence="1">Belongs to the RuvA family.</text>
</comment>
<protein>
    <recommendedName>
        <fullName evidence="1">Holliday junction branch migration complex subunit RuvA</fullName>
    </recommendedName>
</protein>
<evidence type="ECO:0000255" key="1">
    <source>
        <dbReference type="HAMAP-Rule" id="MF_00031"/>
    </source>
</evidence>
<reference key="1">
    <citation type="journal article" date="2004" name="Nat. Biotechnol.">
        <title>Complete sequence and comparative genome analysis of the dairy bacterium Streptococcus thermophilus.</title>
        <authorList>
            <person name="Bolotin A."/>
            <person name="Quinquis B."/>
            <person name="Renault P."/>
            <person name="Sorokin A."/>
            <person name="Ehrlich S.D."/>
            <person name="Kulakauskas S."/>
            <person name="Lapidus A."/>
            <person name="Goltsman E."/>
            <person name="Mazur M."/>
            <person name="Pusch G.D."/>
            <person name="Fonstein M."/>
            <person name="Overbeek R."/>
            <person name="Kyprides N."/>
            <person name="Purnelle B."/>
            <person name="Prozzi D."/>
            <person name="Ngui K."/>
            <person name="Masuy D."/>
            <person name="Hancy F."/>
            <person name="Burteau S."/>
            <person name="Boutry M."/>
            <person name="Delcour J."/>
            <person name="Goffeau A."/>
            <person name="Hols P."/>
        </authorList>
    </citation>
    <scope>NUCLEOTIDE SEQUENCE [LARGE SCALE GENOMIC DNA]</scope>
    <source>
        <strain>ATCC BAA-250 / LMG 18311</strain>
    </source>
</reference>
<keyword id="KW-0963">Cytoplasm</keyword>
<keyword id="KW-0227">DNA damage</keyword>
<keyword id="KW-0233">DNA recombination</keyword>
<keyword id="KW-0234">DNA repair</keyword>
<keyword id="KW-0238">DNA-binding</keyword>
<keyword id="KW-1185">Reference proteome</keyword>
<gene>
    <name evidence="1" type="primary">ruvA</name>
    <name type="ordered locus">stu0056</name>
</gene>